<reference key="1">
    <citation type="journal article" date="2005" name="Nat. Genet.">
        <title>The complete genome sequence of Francisella tularensis, the causative agent of tularemia.</title>
        <authorList>
            <person name="Larsson P."/>
            <person name="Oyston P.C.F."/>
            <person name="Chain P."/>
            <person name="Chu M.C."/>
            <person name="Duffield M."/>
            <person name="Fuxelius H.-H."/>
            <person name="Garcia E."/>
            <person name="Haelltorp G."/>
            <person name="Johansson D."/>
            <person name="Isherwood K.E."/>
            <person name="Karp P.D."/>
            <person name="Larsson E."/>
            <person name="Liu Y."/>
            <person name="Michell S."/>
            <person name="Prior J."/>
            <person name="Prior R."/>
            <person name="Malfatti S."/>
            <person name="Sjoestedt A."/>
            <person name="Svensson K."/>
            <person name="Thompson N."/>
            <person name="Vergez L."/>
            <person name="Wagg J.K."/>
            <person name="Wren B.W."/>
            <person name="Lindler L.E."/>
            <person name="Andersson S.G.E."/>
            <person name="Forsman M."/>
            <person name="Titball R.W."/>
        </authorList>
    </citation>
    <scope>NUCLEOTIDE SEQUENCE [LARGE SCALE GENOMIC DNA]</scope>
    <source>
        <strain>SCHU S4 / Schu 4</strain>
    </source>
</reference>
<reference evidence="3" key="2">
    <citation type="submission" date="2016-01" db="PDB data bank">
        <title>3.0 angstrom crystal structure of 3-dehydroquinate synthase (AroB) from Francisella tularensis in complex with NAD.</title>
        <authorList>
            <person name="Minasov G."/>
            <person name="Light S.H."/>
            <person name="Shuvalova L."/>
            <person name="Dubrovska I."/>
            <person name="Winsor J."/>
            <person name="Zhou M."/>
            <person name="Grimshaw S."/>
            <person name="Kwon K."/>
            <person name="Joachimiak A."/>
            <person name="Anderson W.F."/>
        </authorList>
    </citation>
    <scope>X-RAY CRYSTALLOGRAPHY (3.00 ANGSTROMS) IN COMPLEX WITH NAD</scope>
</reference>
<name>AROB_FRATT</name>
<protein>
    <recommendedName>
        <fullName evidence="1">3-dehydroquinate synthase</fullName>
        <shortName evidence="1">DHQS</shortName>
        <ecNumber evidence="1">4.2.3.4</ecNumber>
    </recommendedName>
</protein>
<feature type="chain" id="PRO_0000231087" description="3-dehydroquinate synthase">
    <location>
        <begin position="1"/>
        <end position="359"/>
    </location>
</feature>
<feature type="binding site" evidence="2 3">
    <location>
        <position position="42"/>
    </location>
    <ligand>
        <name>NAD(+)</name>
        <dbReference type="ChEBI" id="CHEBI:57540"/>
    </ligand>
</feature>
<feature type="binding site" evidence="1 2 3">
    <location>
        <begin position="70"/>
        <end position="75"/>
    </location>
    <ligand>
        <name>NAD(+)</name>
        <dbReference type="ChEBI" id="CHEBI:57540"/>
    </ligand>
</feature>
<feature type="binding site" evidence="1 2 3">
    <location>
        <begin position="105"/>
        <end position="109"/>
    </location>
    <ligand>
        <name>NAD(+)</name>
        <dbReference type="ChEBI" id="CHEBI:57540"/>
    </ligand>
</feature>
<feature type="binding site" evidence="1 2 3">
    <location>
        <begin position="129"/>
        <end position="130"/>
    </location>
    <ligand>
        <name>NAD(+)</name>
        <dbReference type="ChEBI" id="CHEBI:57540"/>
    </ligand>
</feature>
<feature type="binding site" evidence="1 2 3">
    <location>
        <position position="142"/>
    </location>
    <ligand>
        <name>NAD(+)</name>
        <dbReference type="ChEBI" id="CHEBI:57540"/>
    </ligand>
</feature>
<feature type="binding site" evidence="1">
    <location>
        <position position="151"/>
    </location>
    <ligand>
        <name>NAD(+)</name>
        <dbReference type="ChEBI" id="CHEBI:57540"/>
    </ligand>
</feature>
<feature type="binding site" evidence="1 2 3">
    <location>
        <begin position="169"/>
        <end position="172"/>
    </location>
    <ligand>
        <name>NAD(+)</name>
        <dbReference type="ChEBI" id="CHEBI:57540"/>
    </ligand>
</feature>
<feature type="binding site" evidence="1">
    <location>
        <position position="184"/>
    </location>
    <ligand>
        <name>Zn(2+)</name>
        <dbReference type="ChEBI" id="CHEBI:29105"/>
    </ligand>
</feature>
<feature type="binding site" evidence="1">
    <location>
        <position position="247"/>
    </location>
    <ligand>
        <name>Zn(2+)</name>
        <dbReference type="ChEBI" id="CHEBI:29105"/>
    </ligand>
</feature>
<feature type="binding site" evidence="1">
    <location>
        <position position="264"/>
    </location>
    <ligand>
        <name>Zn(2+)</name>
        <dbReference type="ChEBI" id="CHEBI:29105"/>
    </ligand>
</feature>
<feature type="strand" evidence="4">
    <location>
        <begin position="2"/>
        <end position="7"/>
    </location>
</feature>
<feature type="strand" evidence="4">
    <location>
        <begin position="15"/>
        <end position="22"/>
    </location>
</feature>
<feature type="helix" evidence="4">
    <location>
        <begin position="25"/>
        <end position="31"/>
    </location>
</feature>
<feature type="turn" evidence="4">
    <location>
        <begin position="32"/>
        <end position="34"/>
    </location>
</feature>
<feature type="strand" evidence="4">
    <location>
        <begin position="35"/>
        <end position="42"/>
    </location>
</feature>
<feature type="helix" evidence="4">
    <location>
        <begin position="43"/>
        <end position="57"/>
    </location>
</feature>
<feature type="strand" evidence="4">
    <location>
        <begin position="63"/>
        <end position="68"/>
    </location>
</feature>
<feature type="helix" evidence="4">
    <location>
        <begin position="72"/>
        <end position="74"/>
    </location>
</feature>
<feature type="helix" evidence="4">
    <location>
        <begin position="77"/>
        <end position="89"/>
    </location>
</feature>
<feature type="strand" evidence="4">
    <location>
        <begin position="97"/>
        <end position="104"/>
    </location>
</feature>
<feature type="helix" evidence="4">
    <location>
        <begin position="105"/>
        <end position="117"/>
    </location>
</feature>
<feature type="helix" evidence="4">
    <location>
        <begin position="118"/>
        <end position="120"/>
    </location>
</feature>
<feature type="strand" evidence="4">
    <location>
        <begin position="123"/>
        <end position="128"/>
    </location>
</feature>
<feature type="helix" evidence="4">
    <location>
        <begin position="131"/>
        <end position="136"/>
    </location>
</feature>
<feature type="strand" evidence="4">
    <location>
        <begin position="142"/>
        <end position="147"/>
    </location>
</feature>
<feature type="strand" evidence="4">
    <location>
        <begin position="150"/>
        <end position="157"/>
    </location>
</feature>
<feature type="strand" evidence="4">
    <location>
        <begin position="161"/>
        <end position="166"/>
    </location>
</feature>
<feature type="helix" evidence="4">
    <location>
        <begin position="167"/>
        <end position="171"/>
    </location>
</feature>
<feature type="helix" evidence="4">
    <location>
        <begin position="175"/>
        <end position="191"/>
    </location>
</feature>
<feature type="helix" evidence="4">
    <location>
        <begin position="193"/>
        <end position="207"/>
    </location>
</feature>
<feature type="helix" evidence="4">
    <location>
        <begin position="211"/>
        <end position="229"/>
    </location>
</feature>
<feature type="helix" evidence="4">
    <location>
        <begin position="239"/>
        <end position="244"/>
    </location>
</feature>
<feature type="helix" evidence="4">
    <location>
        <begin position="247"/>
        <end position="257"/>
    </location>
</feature>
<feature type="strand" evidence="4">
    <location>
        <begin position="260"/>
        <end position="262"/>
    </location>
</feature>
<feature type="helix" evidence="4">
    <location>
        <begin position="264"/>
        <end position="281"/>
    </location>
</feature>
<feature type="helix" evidence="4">
    <location>
        <begin position="287"/>
        <end position="299"/>
    </location>
</feature>
<feature type="helix" evidence="4">
    <location>
        <begin position="312"/>
        <end position="320"/>
    </location>
</feature>
<feature type="strand" evidence="4">
    <location>
        <begin position="331"/>
        <end position="337"/>
    </location>
</feature>
<feature type="strand" evidence="4">
    <location>
        <begin position="340"/>
        <end position="345"/>
    </location>
</feature>
<feature type="helix" evidence="4">
    <location>
        <begin position="348"/>
        <end position="358"/>
    </location>
</feature>
<keyword id="KW-0002">3D-structure</keyword>
<keyword id="KW-0028">Amino-acid biosynthesis</keyword>
<keyword id="KW-0057">Aromatic amino acid biosynthesis</keyword>
<keyword id="KW-0170">Cobalt</keyword>
<keyword id="KW-0963">Cytoplasm</keyword>
<keyword id="KW-0456">Lyase</keyword>
<keyword id="KW-0479">Metal-binding</keyword>
<keyword id="KW-0520">NAD</keyword>
<keyword id="KW-0547">Nucleotide-binding</keyword>
<keyword id="KW-1185">Reference proteome</keyword>
<keyword id="KW-0862">Zinc</keyword>
<dbReference type="EC" id="4.2.3.4" evidence="1"/>
<dbReference type="EMBL" id="AJ749949">
    <property type="protein sequence ID" value="CAG45787.1"/>
    <property type="molecule type" value="Genomic_DNA"/>
</dbReference>
<dbReference type="RefSeq" id="WP_003021364.1">
    <property type="nucleotide sequence ID" value="NC_006570.2"/>
</dbReference>
<dbReference type="RefSeq" id="YP_170121.1">
    <property type="nucleotide sequence ID" value="NC_006570.2"/>
</dbReference>
<dbReference type="PDB" id="5HVN">
    <property type="method" value="X-ray"/>
    <property type="resolution" value="3.00 A"/>
    <property type="chains" value="A=1-359"/>
</dbReference>
<dbReference type="PDBsum" id="5HVN"/>
<dbReference type="SMR" id="Q5NFS1"/>
<dbReference type="STRING" id="177416.FTT_1154c"/>
<dbReference type="DNASU" id="3190946"/>
<dbReference type="EnsemblBacteria" id="CAG45787">
    <property type="protein sequence ID" value="CAG45787"/>
    <property type="gene ID" value="FTT_1154c"/>
</dbReference>
<dbReference type="KEGG" id="ftu:FTT_1154c"/>
<dbReference type="eggNOG" id="COG0337">
    <property type="taxonomic scope" value="Bacteria"/>
</dbReference>
<dbReference type="OrthoDB" id="9806583at2"/>
<dbReference type="UniPathway" id="UPA00053">
    <property type="reaction ID" value="UER00085"/>
</dbReference>
<dbReference type="EvolutionaryTrace" id="Q5NFS1"/>
<dbReference type="Proteomes" id="UP000001174">
    <property type="component" value="Chromosome"/>
</dbReference>
<dbReference type="GO" id="GO:0005737">
    <property type="term" value="C:cytoplasm"/>
    <property type="evidence" value="ECO:0007669"/>
    <property type="project" value="UniProtKB-SubCell"/>
</dbReference>
<dbReference type="GO" id="GO:0003856">
    <property type="term" value="F:3-dehydroquinate synthase activity"/>
    <property type="evidence" value="ECO:0007669"/>
    <property type="project" value="UniProtKB-UniRule"/>
</dbReference>
<dbReference type="GO" id="GO:0046872">
    <property type="term" value="F:metal ion binding"/>
    <property type="evidence" value="ECO:0007669"/>
    <property type="project" value="UniProtKB-KW"/>
</dbReference>
<dbReference type="GO" id="GO:0000166">
    <property type="term" value="F:nucleotide binding"/>
    <property type="evidence" value="ECO:0007669"/>
    <property type="project" value="UniProtKB-KW"/>
</dbReference>
<dbReference type="GO" id="GO:0008652">
    <property type="term" value="P:amino acid biosynthetic process"/>
    <property type="evidence" value="ECO:0007669"/>
    <property type="project" value="UniProtKB-KW"/>
</dbReference>
<dbReference type="GO" id="GO:0009073">
    <property type="term" value="P:aromatic amino acid family biosynthetic process"/>
    <property type="evidence" value="ECO:0007669"/>
    <property type="project" value="UniProtKB-KW"/>
</dbReference>
<dbReference type="GO" id="GO:0009423">
    <property type="term" value="P:chorismate biosynthetic process"/>
    <property type="evidence" value="ECO:0007669"/>
    <property type="project" value="UniProtKB-UniRule"/>
</dbReference>
<dbReference type="CDD" id="cd08195">
    <property type="entry name" value="DHQS"/>
    <property type="match status" value="1"/>
</dbReference>
<dbReference type="FunFam" id="3.40.50.1970:FF:000001">
    <property type="entry name" value="3-dehydroquinate synthase"/>
    <property type="match status" value="1"/>
</dbReference>
<dbReference type="Gene3D" id="3.40.50.1970">
    <property type="match status" value="1"/>
</dbReference>
<dbReference type="Gene3D" id="1.20.1090.10">
    <property type="entry name" value="Dehydroquinate synthase-like - alpha domain"/>
    <property type="match status" value="1"/>
</dbReference>
<dbReference type="HAMAP" id="MF_00110">
    <property type="entry name" value="DHQ_synthase"/>
    <property type="match status" value="1"/>
</dbReference>
<dbReference type="InterPro" id="IPR050071">
    <property type="entry name" value="Dehydroquinate_synthase"/>
</dbReference>
<dbReference type="InterPro" id="IPR016037">
    <property type="entry name" value="DHQ_synth_AroB"/>
</dbReference>
<dbReference type="InterPro" id="IPR030963">
    <property type="entry name" value="DHQ_synth_fam"/>
</dbReference>
<dbReference type="InterPro" id="IPR030960">
    <property type="entry name" value="DHQS/DOIS_N"/>
</dbReference>
<dbReference type="InterPro" id="IPR056179">
    <property type="entry name" value="DHQS_C"/>
</dbReference>
<dbReference type="NCBIfam" id="TIGR01357">
    <property type="entry name" value="aroB"/>
    <property type="match status" value="1"/>
</dbReference>
<dbReference type="PANTHER" id="PTHR43622">
    <property type="entry name" value="3-DEHYDROQUINATE SYNTHASE"/>
    <property type="match status" value="1"/>
</dbReference>
<dbReference type="PANTHER" id="PTHR43622:SF7">
    <property type="entry name" value="3-DEHYDROQUINATE SYNTHASE, CHLOROPLASTIC"/>
    <property type="match status" value="1"/>
</dbReference>
<dbReference type="Pfam" id="PF01761">
    <property type="entry name" value="DHQ_synthase"/>
    <property type="match status" value="1"/>
</dbReference>
<dbReference type="Pfam" id="PF24621">
    <property type="entry name" value="DHQS_C"/>
    <property type="match status" value="1"/>
</dbReference>
<dbReference type="PIRSF" id="PIRSF001455">
    <property type="entry name" value="DHQ_synth"/>
    <property type="match status" value="1"/>
</dbReference>
<dbReference type="SUPFAM" id="SSF56796">
    <property type="entry name" value="Dehydroquinate synthase-like"/>
    <property type="match status" value="1"/>
</dbReference>
<gene>
    <name evidence="1" type="primary">aroB</name>
    <name type="ordered locus">FTT_1154c</name>
</gene>
<accession>Q5NFS1</accession>
<evidence type="ECO:0000255" key="1">
    <source>
        <dbReference type="HAMAP-Rule" id="MF_00110"/>
    </source>
</evidence>
<evidence type="ECO:0000269" key="2">
    <source ref="2"/>
</evidence>
<evidence type="ECO:0007744" key="3">
    <source>
        <dbReference type="PDB" id="5HVN"/>
    </source>
</evidence>
<evidence type="ECO:0007829" key="4">
    <source>
        <dbReference type="PDB" id="5HVN"/>
    </source>
</evidence>
<comment type="function">
    <text evidence="1">Catalyzes the conversion of 3-deoxy-D-arabino-heptulosonate 7-phosphate (DAHP) to dehydroquinate (DHQ).</text>
</comment>
<comment type="catalytic activity">
    <reaction evidence="1">
        <text>7-phospho-2-dehydro-3-deoxy-D-arabino-heptonate = 3-dehydroquinate + phosphate</text>
        <dbReference type="Rhea" id="RHEA:21968"/>
        <dbReference type="ChEBI" id="CHEBI:32364"/>
        <dbReference type="ChEBI" id="CHEBI:43474"/>
        <dbReference type="ChEBI" id="CHEBI:58394"/>
        <dbReference type="EC" id="4.2.3.4"/>
    </reaction>
</comment>
<comment type="cofactor">
    <cofactor evidence="1">
        <name>Co(2+)</name>
        <dbReference type="ChEBI" id="CHEBI:48828"/>
    </cofactor>
    <cofactor evidence="1">
        <name>Zn(2+)</name>
        <dbReference type="ChEBI" id="CHEBI:29105"/>
    </cofactor>
    <text evidence="1">Binds 1 divalent metal cation per subunit. Can use either Co(2+) or Zn(2+).</text>
</comment>
<comment type="cofactor">
    <cofactor evidence="1">
        <name>NAD(+)</name>
        <dbReference type="ChEBI" id="CHEBI:57540"/>
    </cofactor>
</comment>
<comment type="pathway">
    <text evidence="1">Metabolic intermediate biosynthesis; chorismate biosynthesis; chorismate from D-erythrose 4-phosphate and phosphoenolpyruvate: step 2/7.</text>
</comment>
<comment type="subcellular location">
    <subcellularLocation>
        <location evidence="1">Cytoplasm</location>
    </subcellularLocation>
</comment>
<comment type="similarity">
    <text evidence="1">Belongs to the sugar phosphate cyclases superfamily. Dehydroquinate synthase family.</text>
</comment>
<organism>
    <name type="scientific">Francisella tularensis subsp. tularensis (strain SCHU S4 / Schu 4)</name>
    <dbReference type="NCBI Taxonomy" id="177416"/>
    <lineage>
        <taxon>Bacteria</taxon>
        <taxon>Pseudomonadati</taxon>
        <taxon>Pseudomonadota</taxon>
        <taxon>Gammaproteobacteria</taxon>
        <taxon>Thiotrichales</taxon>
        <taxon>Francisellaceae</taxon>
        <taxon>Francisella</taxon>
    </lineage>
</organism>
<proteinExistence type="evidence at protein level"/>
<sequence length="359" mass="40156">MISKLSVNPTFSPSYNIIVDSVLDFSHILEYVTNKQVLVVTNTTVAKLYLTKFLAALVDDLDVRTCILEDGEQYKSQQSLDKILSTLLENHFTRNSTVLVALGGGVIGDITGFAAAIYQRGIDFIQIPTTLLSQVDSSVGGKTAINHQLGKNMIGAFYQPKVVYTSIEFYKTLPQREYIAGMAEVVKYAFISKDFYLWLDSNRDKILAKDSVTLIEMVKRSCQIKAQVVAMDEKELTGARAILNFGHTFGHAIEKCQNYRGLKHGEAVGVGMAQAIDFSHYLGLISQQQAKDFNDFIVSFGISIDFPNDICQKEFLEAMLLDKKNSNKELKFILIENIGSLSLQKQSKNELEQFLDISR</sequence>